<sequence>MMPQLRDSGNHSTAPLDGRTRGEVDAFIRIFGIETEYGVSVTGADAPCDAGQTAMMMFQPIVAQARSTNTYIENGSRLYLDVGSHPEYATAEARDPMDALALDAAGELVMRDLAMDTQHRLREGHGRRAIVHVFKNNADSAGHSFGCHENYLVRRFVPLETIEHELLPFLITRQIFTGAGRVGGQGFQITQRADFLDEAVSSATTRSRPMVNTRDEPHADPDAFRRLHVIIGDSNRSQWATMMKLATTHLVLCVIEQAGREGRESGFARFAFADPGAANHAVSRDASGVGAVFDMADGDVIRGGAVAVQERYLAAVERFVEDHPEVGASLPRTDVHDVIAQWHEALEAFRSGDVDALADRVDWVCKKRLFDALQARTGHLPASRLEQLDMDYHDVANGTVYASLCRRGGMRTLLGRDAADRAVHMPPDDTRAALRGRFVREAKAKGARYSCDWTRLTLMSPHHSEMVLLDPFDFEESERFRQMMDMLA</sequence>
<keyword id="KW-0067">ATP-binding</keyword>
<keyword id="KW-0436">Ligase</keyword>
<keyword id="KW-0460">Magnesium</keyword>
<keyword id="KW-0479">Metal-binding</keyword>
<keyword id="KW-0547">Nucleotide-binding</keyword>
<keyword id="KW-1185">Reference proteome</keyword>
<keyword id="KW-0833">Ubl conjugation pathway</keyword>
<dbReference type="EC" id="6.3.1.19" evidence="1"/>
<dbReference type="EMBL" id="CP001750">
    <property type="protein sequence ID" value="ADB09416.1"/>
    <property type="molecule type" value="Genomic_DNA"/>
</dbReference>
<dbReference type="SMR" id="D2Q9D0"/>
<dbReference type="STRING" id="401473.BDP_0755"/>
<dbReference type="KEGG" id="bde:BDP_0755"/>
<dbReference type="eggNOG" id="COG0638">
    <property type="taxonomic scope" value="Bacteria"/>
</dbReference>
<dbReference type="HOGENOM" id="CLU_040524_1_0_11"/>
<dbReference type="UniPathway" id="UPA00997"/>
<dbReference type="UniPathway" id="UPA00998"/>
<dbReference type="Proteomes" id="UP000008693">
    <property type="component" value="Chromosome"/>
</dbReference>
<dbReference type="GO" id="GO:0005524">
    <property type="term" value="F:ATP binding"/>
    <property type="evidence" value="ECO:0007669"/>
    <property type="project" value="UniProtKB-UniRule"/>
</dbReference>
<dbReference type="GO" id="GO:0016879">
    <property type="term" value="F:ligase activity, forming carbon-nitrogen bonds"/>
    <property type="evidence" value="ECO:0007669"/>
    <property type="project" value="InterPro"/>
</dbReference>
<dbReference type="GO" id="GO:0000287">
    <property type="term" value="F:magnesium ion binding"/>
    <property type="evidence" value="ECO:0007669"/>
    <property type="project" value="UniProtKB-UniRule"/>
</dbReference>
<dbReference type="GO" id="GO:0019787">
    <property type="term" value="F:ubiquitin-like protein transferase activity"/>
    <property type="evidence" value="ECO:0007669"/>
    <property type="project" value="UniProtKB-UniRule"/>
</dbReference>
<dbReference type="GO" id="GO:0019941">
    <property type="term" value="P:modification-dependent protein catabolic process"/>
    <property type="evidence" value="ECO:0007669"/>
    <property type="project" value="UniProtKB-UniRule"/>
</dbReference>
<dbReference type="GO" id="GO:0010498">
    <property type="term" value="P:proteasomal protein catabolic process"/>
    <property type="evidence" value="ECO:0007669"/>
    <property type="project" value="UniProtKB-UniRule"/>
</dbReference>
<dbReference type="GO" id="GO:0070490">
    <property type="term" value="P:protein pupylation"/>
    <property type="evidence" value="ECO:0007669"/>
    <property type="project" value="UniProtKB-UniRule"/>
</dbReference>
<dbReference type="HAMAP" id="MF_02111">
    <property type="entry name" value="Pup_ligase"/>
    <property type="match status" value="1"/>
</dbReference>
<dbReference type="InterPro" id="IPR022279">
    <property type="entry name" value="Pup_ligase"/>
</dbReference>
<dbReference type="InterPro" id="IPR004347">
    <property type="entry name" value="Pup_ligase/deamidase"/>
</dbReference>
<dbReference type="PANTHER" id="PTHR42307">
    <property type="entry name" value="PUP DEAMIDASE/DEPUPYLASE"/>
    <property type="match status" value="1"/>
</dbReference>
<dbReference type="PANTHER" id="PTHR42307:SF3">
    <property type="entry name" value="PUP--PROTEIN LIGASE"/>
    <property type="match status" value="1"/>
</dbReference>
<dbReference type="Pfam" id="PF03136">
    <property type="entry name" value="Pup_ligase"/>
    <property type="match status" value="1"/>
</dbReference>
<name>PAFA_BIFDB</name>
<organism>
    <name type="scientific">Bifidobacterium dentium (strain ATCC 27534 / DSM 20436 / JCM 1195 / Bd1)</name>
    <dbReference type="NCBI Taxonomy" id="401473"/>
    <lineage>
        <taxon>Bacteria</taxon>
        <taxon>Bacillati</taxon>
        <taxon>Actinomycetota</taxon>
        <taxon>Actinomycetes</taxon>
        <taxon>Bifidobacteriales</taxon>
        <taxon>Bifidobacteriaceae</taxon>
        <taxon>Bifidobacterium</taxon>
    </lineage>
</organism>
<proteinExistence type="inferred from homology"/>
<accession>D2Q9D0</accession>
<protein>
    <recommendedName>
        <fullName evidence="1">Pup--protein ligase</fullName>
        <ecNumber evidence="1">6.3.1.19</ecNumber>
    </recommendedName>
    <alternativeName>
        <fullName evidence="1">Proteasome accessory factor A</fullName>
    </alternativeName>
    <alternativeName>
        <fullName evidence="1">Pup-conjugating enzyme</fullName>
    </alternativeName>
</protein>
<comment type="function">
    <text evidence="1">Catalyzes the covalent attachment of the prokaryotic ubiquitin-like protein modifier Pup to the proteasomal substrate proteins, thereby targeting them for proteasomal degradation. This tagging system is termed pupylation. The ligation reaction involves the side-chain carboxylate of the C-terminal glutamate of Pup and the side-chain amino group of a substrate lysine.</text>
</comment>
<comment type="catalytic activity">
    <reaction evidence="1">
        <text>ATP + [prokaryotic ubiquitin-like protein]-L-glutamate + [protein]-L-lysine = ADP + phosphate + N(6)-([prokaryotic ubiquitin-like protein]-gamma-L-glutamyl)-[protein]-L-lysine.</text>
        <dbReference type="EC" id="6.3.1.19"/>
    </reaction>
</comment>
<comment type="pathway">
    <text evidence="1">Protein degradation; proteasomal Pup-dependent pathway.</text>
</comment>
<comment type="pathway">
    <text evidence="1">Protein modification; protein pupylation.</text>
</comment>
<comment type="miscellaneous">
    <text evidence="1">The reaction mechanism probably proceeds via the activation of Pup by phosphorylation of its C-terminal glutamate, which is then subject to nucleophilic attack by the substrate lysine, resulting in an isopeptide bond and the release of phosphate as a good leaving group.</text>
</comment>
<comment type="similarity">
    <text evidence="1">Belongs to the Pup ligase/Pup deamidase family. Pup-conjugating enzyme subfamily.</text>
</comment>
<gene>
    <name evidence="1" type="primary">pafA</name>
    <name type="ordered locus">BDP_0755</name>
</gene>
<evidence type="ECO:0000255" key="1">
    <source>
        <dbReference type="HAMAP-Rule" id="MF_02111"/>
    </source>
</evidence>
<feature type="chain" id="PRO_0000395899" description="Pup--protein ligase">
    <location>
        <begin position="1"/>
        <end position="488"/>
    </location>
</feature>
<feature type="active site" description="Proton acceptor" evidence="1">
    <location>
        <position position="81"/>
    </location>
</feature>
<feature type="binding site" evidence="1">
    <location>
        <position position="34"/>
    </location>
    <ligand>
        <name>Mg(2+)</name>
        <dbReference type="ChEBI" id="CHEBI:18420"/>
    </ligand>
</feature>
<feature type="binding site" evidence="1">
    <location>
        <position position="77"/>
    </location>
    <ligand>
        <name>ATP</name>
        <dbReference type="ChEBI" id="CHEBI:30616"/>
    </ligand>
</feature>
<feature type="binding site" evidence="1">
    <location>
        <position position="79"/>
    </location>
    <ligand>
        <name>Mg(2+)</name>
        <dbReference type="ChEBI" id="CHEBI:18420"/>
    </ligand>
</feature>
<feature type="binding site" evidence="1">
    <location>
        <position position="87"/>
    </location>
    <ligand>
        <name>Mg(2+)</name>
        <dbReference type="ChEBI" id="CHEBI:18420"/>
    </ligand>
</feature>
<feature type="binding site" evidence="1">
    <location>
        <position position="90"/>
    </location>
    <ligand>
        <name>ATP</name>
        <dbReference type="ChEBI" id="CHEBI:30616"/>
    </ligand>
</feature>
<feature type="binding site" evidence="1">
    <location>
        <position position="453"/>
    </location>
    <ligand>
        <name>ATP</name>
        <dbReference type="ChEBI" id="CHEBI:30616"/>
    </ligand>
</feature>
<reference key="1">
    <citation type="journal article" date="2009" name="PLoS Genet.">
        <title>The Bifidobacterium dentium Bd1 genome sequence reflects its genetic adaptation to the human oral cavity.</title>
        <authorList>
            <person name="Ventura M."/>
            <person name="Turroni F."/>
            <person name="Zomer A."/>
            <person name="Foroni E."/>
            <person name="Giubellini V."/>
            <person name="Bottacini F."/>
            <person name="Canchaya C."/>
            <person name="Claesson M.J."/>
            <person name="He F."/>
            <person name="Mantzourani M."/>
            <person name="Mulas L."/>
            <person name="Ferrarini A."/>
            <person name="Gao B."/>
            <person name="Delledonne M."/>
            <person name="Henrissat B."/>
            <person name="Coutinho P."/>
            <person name="Oggioni M."/>
            <person name="Gupta R.S."/>
            <person name="Zhang Z."/>
            <person name="Beighton D."/>
            <person name="Fitzgerald G.F."/>
            <person name="O'Toole P.W."/>
            <person name="van Sinderen D."/>
        </authorList>
    </citation>
    <scope>NUCLEOTIDE SEQUENCE [LARGE SCALE GENOMIC DNA]</scope>
    <source>
        <strain>ATCC 27534 / DSM 20436 / JCM 1195 / Bd1</strain>
    </source>
</reference>